<name>CHEB2_AZOBR</name>
<protein>
    <recommendedName>
        <fullName evidence="1">Protein-glutamate methylesterase/protein-glutamine glutaminase</fullName>
        <ecNumber evidence="1">3.1.1.61</ecNumber>
        <ecNumber evidence="1">3.5.1.44</ecNumber>
    </recommendedName>
</protein>
<sequence length="394" mass="40986">MSDGFGRPPPPAPAGHPTGAAGGDPVRVMVVDDSAVIRGLLTRALEGDTEIRVVASVGDGQMAVNALQRNSLDVIVLDIEMPVMDGLTAIPKLLAVAPQVKIIMASTLTLRGADISMRCLSAGAADYIPKPTSTREIGGADAFKRELVSKVKALGAAARRAGSRTRGELRPLNPVPAAFLKREPPPVTLRPAPAVGSVGQVKPDVIAIGSSTGGPQALFEVLAHLKTGVTQPILITQHMPATFTTILAEHITRQCGMNAQEAKDGEPVVPGRCYIAPGDFHMLVTQRAGANVISLTKDPPENFCRPAVDPMMRSILRAFGGRKVLACILTGMGQDGLKGCTEVVNAGGTLIAQDEASSVVWGMPGAVAQAGICSAVLPLKEIGPYIRKFASRAA</sequence>
<accession>Q8VL08</accession>
<reference key="1">
    <citation type="journal article" date="2002" name="FEMS Microbiol. Lett.">
        <title>A major chemotaxis gene cluster in Azospirillum brasilense and relationships between chemotaxis operons in alpha-proteobacteria.</title>
        <authorList>
            <person name="Hauwaerts D."/>
            <person name="Alexandre G."/>
            <person name="Das S.K."/>
            <person name="Vanderleyden J."/>
            <person name="Zhulin I.B."/>
        </authorList>
    </citation>
    <scope>NUCLEOTIDE SEQUENCE [GENOMIC DNA]</scope>
    <source>
        <strain>ATCC 29145 / DSM 1690 / IMET 11303 / Sp7</strain>
    </source>
</reference>
<feature type="chain" id="PRO_0000157974" description="Protein-glutamate methylesterase/protein-glutamine glutaminase">
    <location>
        <begin position="1"/>
        <end position="394"/>
    </location>
</feature>
<feature type="domain" description="Response regulatory" evidence="1">
    <location>
        <begin position="27"/>
        <end position="145"/>
    </location>
</feature>
<feature type="domain" description="CheB-type methylesterase" evidence="1">
    <location>
        <begin position="191"/>
        <end position="393"/>
    </location>
</feature>
<feature type="region of interest" description="Disordered" evidence="2">
    <location>
        <begin position="1"/>
        <end position="24"/>
    </location>
</feature>
<feature type="compositionally biased region" description="Low complexity" evidence="2">
    <location>
        <begin position="15"/>
        <end position="24"/>
    </location>
</feature>
<feature type="active site" evidence="1">
    <location>
        <position position="211"/>
    </location>
</feature>
<feature type="active site" evidence="1">
    <location>
        <position position="238"/>
    </location>
</feature>
<feature type="active site" evidence="1">
    <location>
        <position position="335"/>
    </location>
</feature>
<feature type="modified residue" description="4-aspartylphosphate" evidence="1">
    <location>
        <position position="78"/>
    </location>
</feature>
<organism>
    <name type="scientific">Azospirillum brasilense</name>
    <dbReference type="NCBI Taxonomy" id="192"/>
    <lineage>
        <taxon>Bacteria</taxon>
        <taxon>Pseudomonadati</taxon>
        <taxon>Pseudomonadota</taxon>
        <taxon>Alphaproteobacteria</taxon>
        <taxon>Rhodospirillales</taxon>
        <taxon>Azospirillaceae</taxon>
        <taxon>Azospirillum</taxon>
    </lineage>
</organism>
<proteinExistence type="inferred from homology"/>
<dbReference type="EC" id="3.1.1.61" evidence="1"/>
<dbReference type="EC" id="3.5.1.44" evidence="1"/>
<dbReference type="EMBL" id="AF450326">
    <property type="protein sequence ID" value="AAL47024.1"/>
    <property type="molecule type" value="Genomic_DNA"/>
</dbReference>
<dbReference type="SMR" id="Q8VL08"/>
<dbReference type="GO" id="GO:0005737">
    <property type="term" value="C:cytoplasm"/>
    <property type="evidence" value="ECO:0007669"/>
    <property type="project" value="UniProtKB-SubCell"/>
</dbReference>
<dbReference type="GO" id="GO:0000156">
    <property type="term" value="F:phosphorelay response regulator activity"/>
    <property type="evidence" value="ECO:0007669"/>
    <property type="project" value="InterPro"/>
</dbReference>
<dbReference type="GO" id="GO:0008984">
    <property type="term" value="F:protein-glutamate methylesterase activity"/>
    <property type="evidence" value="ECO:0007669"/>
    <property type="project" value="UniProtKB-UniRule"/>
</dbReference>
<dbReference type="GO" id="GO:0050568">
    <property type="term" value="F:protein-glutamine glutaminase activity"/>
    <property type="evidence" value="ECO:0007669"/>
    <property type="project" value="UniProtKB-UniRule"/>
</dbReference>
<dbReference type="GO" id="GO:0006935">
    <property type="term" value="P:chemotaxis"/>
    <property type="evidence" value="ECO:0007669"/>
    <property type="project" value="UniProtKB-UniRule"/>
</dbReference>
<dbReference type="CDD" id="cd16432">
    <property type="entry name" value="CheB_Rec"/>
    <property type="match status" value="1"/>
</dbReference>
<dbReference type="CDD" id="cd17541">
    <property type="entry name" value="REC_CheB-like"/>
    <property type="match status" value="1"/>
</dbReference>
<dbReference type="Gene3D" id="3.40.50.2300">
    <property type="match status" value="1"/>
</dbReference>
<dbReference type="Gene3D" id="3.40.50.180">
    <property type="entry name" value="Methylesterase CheB, C-terminal domain"/>
    <property type="match status" value="1"/>
</dbReference>
<dbReference type="HAMAP" id="MF_00099">
    <property type="entry name" value="CheB_chemtxs"/>
    <property type="match status" value="1"/>
</dbReference>
<dbReference type="InterPro" id="IPR008248">
    <property type="entry name" value="CheB-like"/>
</dbReference>
<dbReference type="InterPro" id="IPR035909">
    <property type="entry name" value="CheB_C"/>
</dbReference>
<dbReference type="InterPro" id="IPR011006">
    <property type="entry name" value="CheY-like_superfamily"/>
</dbReference>
<dbReference type="InterPro" id="IPR000673">
    <property type="entry name" value="Sig_transdc_resp-reg_Me-estase"/>
</dbReference>
<dbReference type="InterPro" id="IPR001789">
    <property type="entry name" value="Sig_transdc_resp-reg_receiver"/>
</dbReference>
<dbReference type="NCBIfam" id="NF001965">
    <property type="entry name" value="PRK00742.1"/>
    <property type="match status" value="1"/>
</dbReference>
<dbReference type="PANTHER" id="PTHR42872">
    <property type="entry name" value="PROTEIN-GLUTAMATE METHYLESTERASE/PROTEIN-GLUTAMINE GLUTAMINASE"/>
    <property type="match status" value="1"/>
</dbReference>
<dbReference type="PANTHER" id="PTHR42872:SF3">
    <property type="entry name" value="PROTEIN-GLUTAMATE METHYLESTERASE_PROTEIN-GLUTAMINE GLUTAMINASE 1"/>
    <property type="match status" value="1"/>
</dbReference>
<dbReference type="Pfam" id="PF01339">
    <property type="entry name" value="CheB_methylest"/>
    <property type="match status" value="1"/>
</dbReference>
<dbReference type="Pfam" id="PF00072">
    <property type="entry name" value="Response_reg"/>
    <property type="match status" value="1"/>
</dbReference>
<dbReference type="PIRSF" id="PIRSF000876">
    <property type="entry name" value="RR_chemtxs_CheB"/>
    <property type="match status" value="1"/>
</dbReference>
<dbReference type="SMART" id="SM00448">
    <property type="entry name" value="REC"/>
    <property type="match status" value="1"/>
</dbReference>
<dbReference type="SUPFAM" id="SSF52172">
    <property type="entry name" value="CheY-like"/>
    <property type="match status" value="1"/>
</dbReference>
<dbReference type="SUPFAM" id="SSF52738">
    <property type="entry name" value="Methylesterase CheB, C-terminal domain"/>
    <property type="match status" value="1"/>
</dbReference>
<dbReference type="PROSITE" id="PS50122">
    <property type="entry name" value="CHEB"/>
    <property type="match status" value="1"/>
</dbReference>
<dbReference type="PROSITE" id="PS50110">
    <property type="entry name" value="RESPONSE_REGULATORY"/>
    <property type="match status" value="1"/>
</dbReference>
<evidence type="ECO:0000255" key="1">
    <source>
        <dbReference type="HAMAP-Rule" id="MF_00099"/>
    </source>
</evidence>
<evidence type="ECO:0000256" key="2">
    <source>
        <dbReference type="SAM" id="MobiDB-lite"/>
    </source>
</evidence>
<gene>
    <name evidence="1" type="primary">cheB</name>
</gene>
<comment type="function">
    <text evidence="1">Involved in chemotaxis. Part of a chemotaxis signal transduction system that modulates chemotaxis in response to various stimuli. Catalyzes the demethylation of specific methylglutamate residues introduced into the chemoreceptors (methyl-accepting chemotaxis proteins or MCP) by CheR. Also mediates the irreversible deamidation of specific glutamine residues to glutamic acid.</text>
</comment>
<comment type="catalytic activity">
    <reaction evidence="1">
        <text>[protein]-L-glutamate 5-O-methyl ester + H2O = L-glutamyl-[protein] + methanol + H(+)</text>
        <dbReference type="Rhea" id="RHEA:23236"/>
        <dbReference type="Rhea" id="RHEA-COMP:10208"/>
        <dbReference type="Rhea" id="RHEA-COMP:10311"/>
        <dbReference type="ChEBI" id="CHEBI:15377"/>
        <dbReference type="ChEBI" id="CHEBI:15378"/>
        <dbReference type="ChEBI" id="CHEBI:17790"/>
        <dbReference type="ChEBI" id="CHEBI:29973"/>
        <dbReference type="ChEBI" id="CHEBI:82795"/>
        <dbReference type="EC" id="3.1.1.61"/>
    </reaction>
</comment>
<comment type="catalytic activity">
    <reaction evidence="1">
        <text>L-glutaminyl-[protein] + H2O = L-glutamyl-[protein] + NH4(+)</text>
        <dbReference type="Rhea" id="RHEA:16441"/>
        <dbReference type="Rhea" id="RHEA-COMP:10207"/>
        <dbReference type="Rhea" id="RHEA-COMP:10208"/>
        <dbReference type="ChEBI" id="CHEBI:15377"/>
        <dbReference type="ChEBI" id="CHEBI:28938"/>
        <dbReference type="ChEBI" id="CHEBI:29973"/>
        <dbReference type="ChEBI" id="CHEBI:30011"/>
        <dbReference type="EC" id="3.5.1.44"/>
    </reaction>
</comment>
<comment type="subcellular location">
    <subcellularLocation>
        <location evidence="1">Cytoplasm</location>
    </subcellularLocation>
</comment>
<comment type="domain">
    <text evidence="1">Contains a C-terminal catalytic domain, and an N-terminal region which modulates catalytic activity.</text>
</comment>
<comment type="PTM">
    <text evidence="1">Phosphorylated by CheA. Phosphorylation of the N-terminal regulatory domain activates the methylesterase activity.</text>
</comment>
<comment type="similarity">
    <text evidence="1">Belongs to the CheB family.</text>
</comment>
<keyword id="KW-0145">Chemotaxis</keyword>
<keyword id="KW-0963">Cytoplasm</keyword>
<keyword id="KW-0378">Hydrolase</keyword>
<keyword id="KW-0597">Phosphoprotein</keyword>